<comment type="function">
    <text evidence="2">One of the essential components for the initiation of protein synthesis. Protects formylmethionyl-tRNA from spontaneous hydrolysis and promotes its binding to the 30S ribosomal subunits. Also involved in the hydrolysis of GTP during the formation of the 70S ribosomal complex.</text>
</comment>
<comment type="subcellular location">
    <subcellularLocation>
        <location evidence="2">Cytoplasm</location>
    </subcellularLocation>
</comment>
<comment type="similarity">
    <text evidence="2">Belongs to the TRAFAC class translation factor GTPase superfamily. Classic translation factor GTPase family. IF-2 subfamily.</text>
</comment>
<reference key="1">
    <citation type="journal article" date="2003" name="J. Bacteriol.">
        <title>Complete genome sequence of the ammonia-oxidizing bacterium and obligate chemolithoautotroph Nitrosomonas europaea.</title>
        <authorList>
            <person name="Chain P."/>
            <person name="Lamerdin J.E."/>
            <person name="Larimer F.W."/>
            <person name="Regala W."/>
            <person name="Lao V."/>
            <person name="Land M.L."/>
            <person name="Hauser L."/>
            <person name="Hooper A.B."/>
            <person name="Klotz M.G."/>
            <person name="Norton J."/>
            <person name="Sayavedra-Soto L.A."/>
            <person name="Arciero D.M."/>
            <person name="Hommes N.G."/>
            <person name="Whittaker M.M."/>
            <person name="Arp D.J."/>
        </authorList>
    </citation>
    <scope>NUCLEOTIDE SEQUENCE [LARGE SCALE GENOMIC DNA]</scope>
    <source>
        <strain>ATCC 19718 / CIP 103999 / KCTC 2705 / NBRC 14298</strain>
    </source>
</reference>
<keyword id="KW-0963">Cytoplasm</keyword>
<keyword id="KW-0342">GTP-binding</keyword>
<keyword id="KW-0396">Initiation factor</keyword>
<keyword id="KW-0547">Nucleotide-binding</keyword>
<keyword id="KW-0648">Protein biosynthesis</keyword>
<keyword id="KW-1185">Reference proteome</keyword>
<evidence type="ECO:0000250" key="1"/>
<evidence type="ECO:0000255" key="2">
    <source>
        <dbReference type="HAMAP-Rule" id="MF_00100"/>
    </source>
</evidence>
<evidence type="ECO:0000256" key="3">
    <source>
        <dbReference type="SAM" id="MobiDB-lite"/>
    </source>
</evidence>
<gene>
    <name evidence="2" type="primary">infB</name>
    <name type="ordered locus">NE0761</name>
</gene>
<proteinExistence type="inferred from homology"/>
<accession>Q82WD0</accession>
<dbReference type="EMBL" id="AL954747">
    <property type="protein sequence ID" value="CAD84672.1"/>
    <property type="molecule type" value="Genomic_DNA"/>
</dbReference>
<dbReference type="SMR" id="Q82WD0"/>
<dbReference type="STRING" id="228410.NE0761"/>
<dbReference type="KEGG" id="neu:NE0761"/>
<dbReference type="eggNOG" id="COG0532">
    <property type="taxonomic scope" value="Bacteria"/>
</dbReference>
<dbReference type="HOGENOM" id="CLU_006301_6_0_4"/>
<dbReference type="PhylomeDB" id="Q82WD0"/>
<dbReference type="Proteomes" id="UP000001416">
    <property type="component" value="Chromosome"/>
</dbReference>
<dbReference type="GO" id="GO:0005829">
    <property type="term" value="C:cytosol"/>
    <property type="evidence" value="ECO:0007669"/>
    <property type="project" value="TreeGrafter"/>
</dbReference>
<dbReference type="GO" id="GO:0005525">
    <property type="term" value="F:GTP binding"/>
    <property type="evidence" value="ECO:0007669"/>
    <property type="project" value="UniProtKB-KW"/>
</dbReference>
<dbReference type="GO" id="GO:0003924">
    <property type="term" value="F:GTPase activity"/>
    <property type="evidence" value="ECO:0007669"/>
    <property type="project" value="UniProtKB-UniRule"/>
</dbReference>
<dbReference type="GO" id="GO:0003743">
    <property type="term" value="F:translation initiation factor activity"/>
    <property type="evidence" value="ECO:0007669"/>
    <property type="project" value="UniProtKB-UniRule"/>
</dbReference>
<dbReference type="CDD" id="cd01887">
    <property type="entry name" value="IF2_eIF5B"/>
    <property type="match status" value="1"/>
</dbReference>
<dbReference type="CDD" id="cd03702">
    <property type="entry name" value="IF2_mtIF2_II"/>
    <property type="match status" value="1"/>
</dbReference>
<dbReference type="CDD" id="cd03692">
    <property type="entry name" value="mtIF2_IVc"/>
    <property type="match status" value="1"/>
</dbReference>
<dbReference type="FunFam" id="2.40.30.10:FF:000007">
    <property type="entry name" value="Translation initiation factor IF-2"/>
    <property type="match status" value="1"/>
</dbReference>
<dbReference type="FunFam" id="2.40.30.10:FF:000008">
    <property type="entry name" value="Translation initiation factor IF-2"/>
    <property type="match status" value="1"/>
</dbReference>
<dbReference type="FunFam" id="3.40.50.10050:FF:000001">
    <property type="entry name" value="Translation initiation factor IF-2"/>
    <property type="match status" value="1"/>
</dbReference>
<dbReference type="FunFam" id="3.40.50.300:FF:000019">
    <property type="entry name" value="Translation initiation factor IF-2"/>
    <property type="match status" value="1"/>
</dbReference>
<dbReference type="Gene3D" id="3.40.50.300">
    <property type="entry name" value="P-loop containing nucleotide triphosphate hydrolases"/>
    <property type="match status" value="1"/>
</dbReference>
<dbReference type="Gene3D" id="3.30.56.50">
    <property type="entry name" value="Putative DNA-binding domain, N-terminal subdomain of bacterial translation initiation factor IF2"/>
    <property type="match status" value="1"/>
</dbReference>
<dbReference type="Gene3D" id="2.40.30.10">
    <property type="entry name" value="Translation factors"/>
    <property type="match status" value="2"/>
</dbReference>
<dbReference type="Gene3D" id="3.40.50.10050">
    <property type="entry name" value="Translation initiation factor IF- 2, domain 3"/>
    <property type="match status" value="1"/>
</dbReference>
<dbReference type="HAMAP" id="MF_00100_B">
    <property type="entry name" value="IF_2_B"/>
    <property type="match status" value="1"/>
</dbReference>
<dbReference type="InterPro" id="IPR009061">
    <property type="entry name" value="DNA-bd_dom_put_sf"/>
</dbReference>
<dbReference type="InterPro" id="IPR053905">
    <property type="entry name" value="EF-G-like_DII"/>
</dbReference>
<dbReference type="InterPro" id="IPR013575">
    <property type="entry name" value="IF2_assoc_dom_bac"/>
</dbReference>
<dbReference type="InterPro" id="IPR044145">
    <property type="entry name" value="IF2_II"/>
</dbReference>
<dbReference type="InterPro" id="IPR006847">
    <property type="entry name" value="IF2_N"/>
</dbReference>
<dbReference type="InterPro" id="IPR027417">
    <property type="entry name" value="P-loop_NTPase"/>
</dbReference>
<dbReference type="InterPro" id="IPR005225">
    <property type="entry name" value="Small_GTP-bd"/>
</dbReference>
<dbReference type="InterPro" id="IPR000795">
    <property type="entry name" value="T_Tr_GTP-bd_dom"/>
</dbReference>
<dbReference type="InterPro" id="IPR000178">
    <property type="entry name" value="TF_IF2_bacterial-like"/>
</dbReference>
<dbReference type="InterPro" id="IPR015760">
    <property type="entry name" value="TIF_IF2"/>
</dbReference>
<dbReference type="InterPro" id="IPR023115">
    <property type="entry name" value="TIF_IF2_dom3"/>
</dbReference>
<dbReference type="InterPro" id="IPR036925">
    <property type="entry name" value="TIF_IF2_dom3_sf"/>
</dbReference>
<dbReference type="InterPro" id="IPR009000">
    <property type="entry name" value="Transl_B-barrel_sf"/>
</dbReference>
<dbReference type="NCBIfam" id="TIGR00487">
    <property type="entry name" value="IF-2"/>
    <property type="match status" value="1"/>
</dbReference>
<dbReference type="NCBIfam" id="TIGR00231">
    <property type="entry name" value="small_GTP"/>
    <property type="match status" value="1"/>
</dbReference>
<dbReference type="PANTHER" id="PTHR43381:SF5">
    <property type="entry name" value="TR-TYPE G DOMAIN-CONTAINING PROTEIN"/>
    <property type="match status" value="1"/>
</dbReference>
<dbReference type="PANTHER" id="PTHR43381">
    <property type="entry name" value="TRANSLATION INITIATION FACTOR IF-2-RELATED"/>
    <property type="match status" value="1"/>
</dbReference>
<dbReference type="Pfam" id="PF22042">
    <property type="entry name" value="EF-G_D2"/>
    <property type="match status" value="1"/>
</dbReference>
<dbReference type="Pfam" id="PF00009">
    <property type="entry name" value="GTP_EFTU"/>
    <property type="match status" value="1"/>
</dbReference>
<dbReference type="Pfam" id="PF11987">
    <property type="entry name" value="IF-2"/>
    <property type="match status" value="1"/>
</dbReference>
<dbReference type="Pfam" id="PF08364">
    <property type="entry name" value="IF2_assoc"/>
    <property type="match status" value="1"/>
</dbReference>
<dbReference type="Pfam" id="PF04760">
    <property type="entry name" value="IF2_N"/>
    <property type="match status" value="1"/>
</dbReference>
<dbReference type="SUPFAM" id="SSF52156">
    <property type="entry name" value="Initiation factor IF2/eIF5b, domain 3"/>
    <property type="match status" value="1"/>
</dbReference>
<dbReference type="SUPFAM" id="SSF52540">
    <property type="entry name" value="P-loop containing nucleoside triphosphate hydrolases"/>
    <property type="match status" value="1"/>
</dbReference>
<dbReference type="SUPFAM" id="SSF46955">
    <property type="entry name" value="Putative DNA-binding domain"/>
    <property type="match status" value="1"/>
</dbReference>
<dbReference type="SUPFAM" id="SSF50447">
    <property type="entry name" value="Translation proteins"/>
    <property type="match status" value="2"/>
</dbReference>
<dbReference type="PROSITE" id="PS51722">
    <property type="entry name" value="G_TR_2"/>
    <property type="match status" value="1"/>
</dbReference>
<dbReference type="PROSITE" id="PS01176">
    <property type="entry name" value="IF2"/>
    <property type="match status" value="1"/>
</dbReference>
<organism>
    <name type="scientific">Nitrosomonas europaea (strain ATCC 19718 / CIP 103999 / KCTC 2705 / NBRC 14298)</name>
    <dbReference type="NCBI Taxonomy" id="228410"/>
    <lineage>
        <taxon>Bacteria</taxon>
        <taxon>Pseudomonadati</taxon>
        <taxon>Pseudomonadota</taxon>
        <taxon>Betaproteobacteria</taxon>
        <taxon>Nitrosomonadales</taxon>
        <taxon>Nitrosomonadaceae</taxon>
        <taxon>Nitrosomonas</taxon>
    </lineage>
</organism>
<feature type="chain" id="PRO_0000137228" description="Translation initiation factor IF-2">
    <location>
        <begin position="1"/>
        <end position="889"/>
    </location>
</feature>
<feature type="domain" description="tr-type G">
    <location>
        <begin position="391"/>
        <end position="560"/>
    </location>
</feature>
<feature type="region of interest" description="Disordered" evidence="3">
    <location>
        <begin position="158"/>
        <end position="296"/>
    </location>
</feature>
<feature type="region of interest" description="G1" evidence="1">
    <location>
        <begin position="400"/>
        <end position="407"/>
    </location>
</feature>
<feature type="region of interest" description="G2" evidence="1">
    <location>
        <begin position="425"/>
        <end position="429"/>
    </location>
</feature>
<feature type="region of interest" description="G3" evidence="1">
    <location>
        <begin position="446"/>
        <end position="449"/>
    </location>
</feature>
<feature type="region of interest" description="G4" evidence="1">
    <location>
        <begin position="500"/>
        <end position="503"/>
    </location>
</feature>
<feature type="region of interest" description="G5" evidence="1">
    <location>
        <begin position="536"/>
        <end position="538"/>
    </location>
</feature>
<feature type="compositionally biased region" description="Low complexity" evidence="3">
    <location>
        <begin position="209"/>
        <end position="228"/>
    </location>
</feature>
<feature type="compositionally biased region" description="Basic and acidic residues" evidence="3">
    <location>
        <begin position="238"/>
        <end position="270"/>
    </location>
</feature>
<feature type="binding site" evidence="2">
    <location>
        <begin position="400"/>
        <end position="407"/>
    </location>
    <ligand>
        <name>GTP</name>
        <dbReference type="ChEBI" id="CHEBI:37565"/>
    </ligand>
</feature>
<feature type="binding site" evidence="2">
    <location>
        <begin position="446"/>
        <end position="450"/>
    </location>
    <ligand>
        <name>GTP</name>
        <dbReference type="ChEBI" id="CHEBI:37565"/>
    </ligand>
</feature>
<feature type="binding site" evidence="2">
    <location>
        <begin position="500"/>
        <end position="503"/>
    </location>
    <ligand>
        <name>GTP</name>
        <dbReference type="ChEBI" id="CHEBI:37565"/>
    </ligand>
</feature>
<name>IF2_NITEU</name>
<protein>
    <recommendedName>
        <fullName evidence="2">Translation initiation factor IF-2</fullName>
    </recommendedName>
</protein>
<sequence>MLMTQMTVEQFAHDLGMLPGLLLEQLQAAGVDKRSAADFVTEQDKTRLLDYLRKSHGSSGPRTRITLARKQTTEIKQSDSTGRPRTIEVKVKKTRVLTRQNEPEVIEKSVSEEPAPLKMVETPEPTIVKSVVDAEQMALRAEEARKRSELIARQAAELKEKQEKRRQQAAAQANVKKEPAPAEQESGPATAVTPGSVTEISSKLPETGAAATPATSTAPATTSTTAATKGHAPQKPVVKPEEKGEKKKKPTKQDAWKDEPVKRREPKARGDLSGGQEWRMRKDKHGKYKSDELQSQHAFSVPTEPVIHEVLIPETISVGALAQKMAVKAAEVIKVLMKMGSMVTINQMLDQETAMVVVEEMGHIAKIAASDNPESFLEEVDVSSDEARMEPRAPVVTVMGHVDHGKTSLLDYIRRTRVAGGEAGGITQHIGAYHVETSRGVITFLDTPGHEAFTAMRARGAKITDIVILVVAADDGVMPQTIEAIHHAKAANIPIVVAVNKMDKPEANFDRIKQELVNHGVVPEDWGGDAMFIGVSAKTGLGIDELLEAVLLQAEVLELKAVREAPAKGVVIESRLDKGRGPVATVLVQSGTLRRGDAVLTGAVFGKIRAMLNERGKSISEASTSIPVEIQGLSEVAVAGEVFIALDDERKAREIALFRQGKFRDVRLDKLQVAKMEDVFGQHEDVSTLNLIIKADVQGSCEALVYALKKLETDEVKINVVHSGVGAIIESDINLALASKAVVIGFNCRADLGARKLITSTGVDVRYYNIIYEAVDEVKKALSGMMMPDRKEKILGMVDIREIYRISKVGVVAGCYVLEGLIKRDALVRLLRDGLVIHSGSLDSLKRFKEDVREVKSGFECGLSLKNFNDIQQGDQIEVYEIVETARVL</sequence>